<sequence>MVAFTSLLAGFAAIAGVLSAPTESSVEVEKRQTIGPGTGYSNGYYYSYWNDGHAGVTYTNGGGGSFTVNWSNSGNFVGGKGWQPGTKNKVINFSGSYNPNGNSYLSIYGWSRNPLIEYYIVENFGTYNPSTGATKLGEVTSDGSVYDIYRTQRVNQPSIIGTATFYQYWSVRRNHRSSGSVNTANHFNAWASHGLTLGTMDYQIVAVEGYFSSGSASITVS</sequence>
<name>XYN2_TRIHA</name>
<dbReference type="EC" id="3.2.1.8"/>
<dbReference type="EMBL" id="EU821597">
    <property type="protein sequence ID" value="ACF40831.1"/>
    <property type="molecule type" value="mRNA"/>
</dbReference>
<dbReference type="SMR" id="B5A7N4"/>
<dbReference type="CAZy" id="GH11">
    <property type="family name" value="Glycoside Hydrolase Family 11"/>
</dbReference>
<dbReference type="GlyCosmos" id="B5A7N4">
    <property type="glycosylation" value="2 sites, No reported glycans"/>
</dbReference>
<dbReference type="OrthoDB" id="2115822at2759"/>
<dbReference type="UniPathway" id="UPA00114"/>
<dbReference type="GO" id="GO:0005576">
    <property type="term" value="C:extracellular region"/>
    <property type="evidence" value="ECO:0007669"/>
    <property type="project" value="UniProtKB-SubCell"/>
</dbReference>
<dbReference type="GO" id="GO:0031176">
    <property type="term" value="F:endo-1,4-beta-xylanase activity"/>
    <property type="evidence" value="ECO:0007669"/>
    <property type="project" value="UniProtKB-EC"/>
</dbReference>
<dbReference type="GO" id="GO:0045493">
    <property type="term" value="P:xylan catabolic process"/>
    <property type="evidence" value="ECO:0007669"/>
    <property type="project" value="UniProtKB-UniPathway"/>
</dbReference>
<dbReference type="FunFam" id="2.60.120.180:FF:000001">
    <property type="entry name" value="Endo-1,4-beta-xylanase"/>
    <property type="match status" value="1"/>
</dbReference>
<dbReference type="Gene3D" id="2.60.120.180">
    <property type="match status" value="1"/>
</dbReference>
<dbReference type="InterPro" id="IPR013320">
    <property type="entry name" value="ConA-like_dom_sf"/>
</dbReference>
<dbReference type="InterPro" id="IPR013319">
    <property type="entry name" value="GH11/12"/>
</dbReference>
<dbReference type="InterPro" id="IPR018208">
    <property type="entry name" value="GH11_AS_1"/>
</dbReference>
<dbReference type="InterPro" id="IPR033119">
    <property type="entry name" value="GH11_AS_2"/>
</dbReference>
<dbReference type="InterPro" id="IPR033123">
    <property type="entry name" value="GH11_dom"/>
</dbReference>
<dbReference type="InterPro" id="IPR001137">
    <property type="entry name" value="Glyco_hydro_11"/>
</dbReference>
<dbReference type="PANTHER" id="PTHR46828:SF3">
    <property type="entry name" value="ENDO-1,4-BETA-XYLANASE"/>
    <property type="match status" value="1"/>
</dbReference>
<dbReference type="PANTHER" id="PTHR46828">
    <property type="entry name" value="ENDO-1,4-BETA-XYLANASE A-RELATED"/>
    <property type="match status" value="1"/>
</dbReference>
<dbReference type="Pfam" id="PF00457">
    <property type="entry name" value="Glyco_hydro_11"/>
    <property type="match status" value="1"/>
</dbReference>
<dbReference type="PRINTS" id="PR00911">
    <property type="entry name" value="GLHYDRLASE11"/>
</dbReference>
<dbReference type="SUPFAM" id="SSF49899">
    <property type="entry name" value="Concanavalin A-like lectins/glucanases"/>
    <property type="match status" value="1"/>
</dbReference>
<dbReference type="PROSITE" id="PS00776">
    <property type="entry name" value="GH11_1"/>
    <property type="match status" value="1"/>
</dbReference>
<dbReference type="PROSITE" id="PS00777">
    <property type="entry name" value="GH11_2"/>
    <property type="match status" value="1"/>
</dbReference>
<dbReference type="PROSITE" id="PS51761">
    <property type="entry name" value="GH11_3"/>
    <property type="match status" value="1"/>
</dbReference>
<accession>B5A7N4</accession>
<reference key="1">
    <citation type="journal article" date="2009" name="J. Microbiol. Biotechnol.">
        <title>Molecular cloning and expression of the trichoderma harzianum C4 endo-beta-1,4-Xylanase Gene in Saccharomyces cerevisiae.</title>
        <authorList>
            <person name="Lee J.M."/>
            <person name="Shin J.W."/>
            <person name="Nam J.K."/>
            <person name="Choi J.Y."/>
            <person name="Jeong C.S."/>
            <person name="Han I.S."/>
            <person name="Nam S.W."/>
            <person name="Choi Y.J."/>
            <person name="Chung D.K."/>
        </authorList>
    </citation>
    <scope>NUCLEOTIDE SEQUENCE [MRNA]</scope>
    <scope>SUBCELLULAR LOCATION</scope>
    <scope>FUNCTION</scope>
    <scope>CATALYTIC ACTIVITY</scope>
    <scope>BIOPHYSICOCHEMICAL PROPERTIES</scope>
    <source>
        <strain>C4</strain>
    </source>
</reference>
<protein>
    <recommendedName>
        <fullName>Endo-1,4-beta-xylanase 2</fullName>
        <shortName>Xylanase 2</shortName>
        <ecNumber>3.2.1.8</ecNumber>
    </recommendedName>
    <alternativeName>
        <fullName>1,4-beta-D-xylan xylanohydrolase 2</fullName>
    </alternativeName>
</protein>
<feature type="signal peptide" evidence="1">
    <location>
        <begin position="1"/>
        <end position="19"/>
    </location>
</feature>
<feature type="chain" id="PRO_0000429668" description="Endo-1,4-beta-xylanase 2">
    <location>
        <begin position="20"/>
        <end position="221"/>
    </location>
</feature>
<feature type="domain" description="GH11" evidence="2">
    <location>
        <begin position="32"/>
        <end position="221"/>
    </location>
</feature>
<feature type="active site" description="Nucleophile" evidence="3">
    <location>
        <position position="117"/>
    </location>
</feature>
<feature type="active site" description="Proton donor" evidence="4">
    <location>
        <position position="208"/>
    </location>
</feature>
<feature type="glycosylation site" description="N-linked (GlcNAc...) asparagine" evidence="1">
    <location>
        <position position="69"/>
    </location>
</feature>
<feature type="glycosylation site" description="N-linked (GlcNAc...) asparagine" evidence="1">
    <location>
        <position position="92"/>
    </location>
</feature>
<comment type="function">
    <text evidence="5">Endo-1,4-beta-xylanase involved in the hydrolysis of xylan, a major structural heterogeneous polysaccharide found in plant biomass representing the second most abundant polysaccharide in the biosphere, after cellulose.</text>
</comment>
<comment type="catalytic activity">
    <reaction evidence="5">
        <text>Endohydrolysis of (1-&gt;4)-beta-D-xylosidic linkages in xylans.</text>
        <dbReference type="EC" id="3.2.1.8"/>
    </reaction>
</comment>
<comment type="biophysicochemical properties">
    <phDependence>
        <text evidence="5">Optimum pH is 5.1.</text>
    </phDependence>
    <temperatureDependence>
        <text evidence="5">Optimum temperature is 50 degrees Celsius.</text>
    </temperatureDependence>
</comment>
<comment type="pathway">
    <text>Glycan degradation; xylan degradation.</text>
</comment>
<comment type="subcellular location">
    <subcellularLocation>
        <location evidence="5">Secreted</location>
    </subcellularLocation>
</comment>
<comment type="similarity">
    <text evidence="6">Belongs to the glycosyl hydrolase 11 (cellulase G) family.</text>
</comment>
<proteinExistence type="evidence at protein level"/>
<organism>
    <name type="scientific">Trichoderma harzianum</name>
    <name type="common">Hypocrea lixii</name>
    <dbReference type="NCBI Taxonomy" id="5544"/>
    <lineage>
        <taxon>Eukaryota</taxon>
        <taxon>Fungi</taxon>
        <taxon>Dikarya</taxon>
        <taxon>Ascomycota</taxon>
        <taxon>Pezizomycotina</taxon>
        <taxon>Sordariomycetes</taxon>
        <taxon>Hypocreomycetidae</taxon>
        <taxon>Hypocreales</taxon>
        <taxon>Hypocreaceae</taxon>
        <taxon>Trichoderma</taxon>
    </lineage>
</organism>
<gene>
    <name type="primary">Xyn2</name>
</gene>
<evidence type="ECO:0000255" key="1"/>
<evidence type="ECO:0000255" key="2">
    <source>
        <dbReference type="PROSITE-ProRule" id="PRU01097"/>
    </source>
</evidence>
<evidence type="ECO:0000255" key="3">
    <source>
        <dbReference type="PROSITE-ProRule" id="PRU10062"/>
    </source>
</evidence>
<evidence type="ECO:0000255" key="4">
    <source>
        <dbReference type="PROSITE-ProRule" id="PRU10063"/>
    </source>
</evidence>
<evidence type="ECO:0000269" key="5">
    <source>
    </source>
</evidence>
<evidence type="ECO:0000305" key="6"/>
<keyword id="KW-0119">Carbohydrate metabolism</keyword>
<keyword id="KW-0325">Glycoprotein</keyword>
<keyword id="KW-0326">Glycosidase</keyword>
<keyword id="KW-0378">Hydrolase</keyword>
<keyword id="KW-0624">Polysaccharide degradation</keyword>
<keyword id="KW-0964">Secreted</keyword>
<keyword id="KW-0732">Signal</keyword>
<keyword id="KW-0858">Xylan degradation</keyword>